<comment type="function">
    <text evidence="1">Binds to 23S rRNA. One of the proteins that surrounds the polypeptide exit tunnel on the outside of the ribosome.</text>
</comment>
<comment type="subunit">
    <text evidence="1">Part of the 50S ribosomal subunit. Contacts protein L29.</text>
</comment>
<comment type="similarity">
    <text evidence="1">Belongs to the universal ribosomal protein uL23 family.</text>
</comment>
<dbReference type="EMBL" id="BA000011">
    <property type="protein sequence ID" value="BAB59472.1"/>
    <property type="molecule type" value="Genomic_DNA"/>
</dbReference>
<dbReference type="RefSeq" id="WP_010916584.1">
    <property type="nucleotide sequence ID" value="NC_002689.2"/>
</dbReference>
<dbReference type="SMR" id="Q97BX5"/>
<dbReference type="STRING" id="273116.gene:9381107"/>
<dbReference type="PaxDb" id="273116-14324545"/>
<dbReference type="GeneID" id="1440842"/>
<dbReference type="KEGG" id="tvo:TVG0334241"/>
<dbReference type="eggNOG" id="arCOG04072">
    <property type="taxonomic scope" value="Archaea"/>
</dbReference>
<dbReference type="HOGENOM" id="CLU_037562_4_2_2"/>
<dbReference type="OrthoDB" id="7751at2157"/>
<dbReference type="PhylomeDB" id="Q97BX5"/>
<dbReference type="Proteomes" id="UP000001017">
    <property type="component" value="Chromosome"/>
</dbReference>
<dbReference type="GO" id="GO:1990904">
    <property type="term" value="C:ribonucleoprotein complex"/>
    <property type="evidence" value="ECO:0007669"/>
    <property type="project" value="UniProtKB-KW"/>
</dbReference>
<dbReference type="GO" id="GO:0005840">
    <property type="term" value="C:ribosome"/>
    <property type="evidence" value="ECO:0007669"/>
    <property type="project" value="UniProtKB-KW"/>
</dbReference>
<dbReference type="GO" id="GO:0019843">
    <property type="term" value="F:rRNA binding"/>
    <property type="evidence" value="ECO:0007669"/>
    <property type="project" value="UniProtKB-UniRule"/>
</dbReference>
<dbReference type="GO" id="GO:0003735">
    <property type="term" value="F:structural constituent of ribosome"/>
    <property type="evidence" value="ECO:0007669"/>
    <property type="project" value="InterPro"/>
</dbReference>
<dbReference type="GO" id="GO:0006412">
    <property type="term" value="P:translation"/>
    <property type="evidence" value="ECO:0007669"/>
    <property type="project" value="UniProtKB-UniRule"/>
</dbReference>
<dbReference type="Gene3D" id="3.30.70.330">
    <property type="match status" value="1"/>
</dbReference>
<dbReference type="HAMAP" id="MF_01369_A">
    <property type="entry name" value="Ribosomal_uL23_A"/>
    <property type="match status" value="1"/>
</dbReference>
<dbReference type="InterPro" id="IPR012677">
    <property type="entry name" value="Nucleotide-bd_a/b_plait_sf"/>
</dbReference>
<dbReference type="InterPro" id="IPR019985">
    <property type="entry name" value="Ribosomal_uL23"/>
</dbReference>
<dbReference type="InterPro" id="IPR013025">
    <property type="entry name" value="Ribosomal_uL23-like"/>
</dbReference>
<dbReference type="InterPro" id="IPR012678">
    <property type="entry name" value="Ribosomal_uL23/eL15/eS24_sf"/>
</dbReference>
<dbReference type="InterPro" id="IPR001014">
    <property type="entry name" value="Ribosomal_uL23_CS"/>
</dbReference>
<dbReference type="NCBIfam" id="NF011118">
    <property type="entry name" value="PRK14548.1"/>
    <property type="match status" value="1"/>
</dbReference>
<dbReference type="NCBIfam" id="TIGR03636">
    <property type="entry name" value="uL23_arch"/>
    <property type="match status" value="1"/>
</dbReference>
<dbReference type="PANTHER" id="PTHR11620">
    <property type="entry name" value="60S RIBOSOMAL PROTEIN L23A"/>
    <property type="match status" value="1"/>
</dbReference>
<dbReference type="Pfam" id="PF00276">
    <property type="entry name" value="Ribosomal_L23"/>
    <property type="match status" value="1"/>
</dbReference>
<dbReference type="SUPFAM" id="SSF54189">
    <property type="entry name" value="Ribosomal proteins S24e, L23 and L15e"/>
    <property type="match status" value="1"/>
</dbReference>
<dbReference type="PROSITE" id="PS00050">
    <property type="entry name" value="RIBOSOMAL_L23"/>
    <property type="match status" value="1"/>
</dbReference>
<proteinExistence type="inferred from homology"/>
<name>RL23_THEVO</name>
<gene>
    <name evidence="1" type="primary">rpl23</name>
    <name type="ordered locus">TV0330</name>
    <name type="ORF">TVG0334241</name>
</gene>
<protein>
    <recommendedName>
        <fullName evidence="1">Large ribosomal subunit protein uL23</fullName>
    </recommendedName>
    <alternativeName>
        <fullName evidence="2">50S ribosomal protein L23</fullName>
    </alternativeName>
</protein>
<keyword id="KW-0687">Ribonucleoprotein</keyword>
<keyword id="KW-0689">Ribosomal protein</keyword>
<keyword id="KW-0694">RNA-binding</keyword>
<keyword id="KW-0699">rRNA-binding</keyword>
<feature type="chain" id="PRO_0000272959" description="Large ribosomal subunit protein uL23">
    <location>
        <begin position="1"/>
        <end position="83"/>
    </location>
</feature>
<sequence>MGDVILSPVSTEKTALLAEKENKLTLIVDRKATKEDIKREVESRFSVKVEGINILITKKGKKAIVKLAKEYSAEEIAERIGVF</sequence>
<evidence type="ECO:0000255" key="1">
    <source>
        <dbReference type="HAMAP-Rule" id="MF_01369"/>
    </source>
</evidence>
<evidence type="ECO:0000305" key="2"/>
<reference key="1">
    <citation type="journal article" date="2000" name="Proc. Natl. Acad. Sci. U.S.A.">
        <title>Archaeal adaptation to higher temperatures revealed by genomic sequence of Thermoplasma volcanium.</title>
        <authorList>
            <person name="Kawashima T."/>
            <person name="Amano N."/>
            <person name="Koike H."/>
            <person name="Makino S."/>
            <person name="Higuchi S."/>
            <person name="Kawashima-Ohya Y."/>
            <person name="Watanabe K."/>
            <person name="Yamazaki M."/>
            <person name="Kanehori K."/>
            <person name="Kawamoto T."/>
            <person name="Nunoshiba T."/>
            <person name="Yamamoto Y."/>
            <person name="Aramaki H."/>
            <person name="Makino K."/>
            <person name="Suzuki M."/>
        </authorList>
    </citation>
    <scope>NUCLEOTIDE SEQUENCE [LARGE SCALE GENOMIC DNA]</scope>
    <source>
        <strain>ATCC 51530 / DSM 4299 / JCM 9571 / NBRC 15438 / GSS1</strain>
    </source>
</reference>
<organism>
    <name type="scientific">Thermoplasma volcanium (strain ATCC 51530 / DSM 4299 / JCM 9571 / NBRC 15438 / GSS1)</name>
    <dbReference type="NCBI Taxonomy" id="273116"/>
    <lineage>
        <taxon>Archaea</taxon>
        <taxon>Methanobacteriati</taxon>
        <taxon>Thermoplasmatota</taxon>
        <taxon>Thermoplasmata</taxon>
        <taxon>Thermoplasmatales</taxon>
        <taxon>Thermoplasmataceae</taxon>
        <taxon>Thermoplasma</taxon>
    </lineage>
</organism>
<accession>Q97BX5</accession>